<reference key="1">
    <citation type="journal article" date="2006" name="PLoS Genet.">
        <title>Genome sequence of Rickettsia bellii illuminates the role of amoebae in gene exchanges between intracellular pathogens.</title>
        <authorList>
            <person name="Ogata H."/>
            <person name="La Scola B."/>
            <person name="Audic S."/>
            <person name="Renesto P."/>
            <person name="Blanc G."/>
            <person name="Robert C."/>
            <person name="Fournier P.-E."/>
            <person name="Claverie J.-M."/>
            <person name="Raoult D."/>
        </authorList>
    </citation>
    <scope>NUCLEOTIDE SEQUENCE [LARGE SCALE GENOMIC DNA]</scope>
    <source>
        <strain>RML369-C</strain>
    </source>
</reference>
<comment type="function">
    <text evidence="2">Involved in base excision repair of DNA damaged by oxidation or by mutagenic agents. Acts as a DNA glycosylase that recognizes and removes damaged bases. Has a preference for oxidized purines, such as 7,8-dihydro-8-oxoguanine (8-oxoG). Has AP (apurinic/apyrimidinic) lyase activity and introduces nicks in the DNA strand. Cleaves the DNA backbone by beta-delta elimination to generate a single-strand break at the site of the removed base with both 3'- and 5'-phosphates.</text>
</comment>
<comment type="catalytic activity">
    <reaction evidence="2">
        <text>Hydrolysis of DNA containing ring-opened 7-methylguanine residues, releasing 2,6-diamino-4-hydroxy-5-(N-methyl)formamidopyrimidine.</text>
        <dbReference type="EC" id="3.2.2.23"/>
    </reaction>
</comment>
<comment type="catalytic activity">
    <reaction evidence="2">
        <text>2'-deoxyribonucleotide-(2'-deoxyribose 5'-phosphate)-2'-deoxyribonucleotide-DNA = a 3'-end 2'-deoxyribonucleotide-(2,3-dehydro-2,3-deoxyribose 5'-phosphate)-DNA + a 5'-end 5'-phospho-2'-deoxyribonucleoside-DNA + H(+)</text>
        <dbReference type="Rhea" id="RHEA:66592"/>
        <dbReference type="Rhea" id="RHEA-COMP:13180"/>
        <dbReference type="Rhea" id="RHEA-COMP:16897"/>
        <dbReference type="Rhea" id="RHEA-COMP:17067"/>
        <dbReference type="ChEBI" id="CHEBI:15378"/>
        <dbReference type="ChEBI" id="CHEBI:136412"/>
        <dbReference type="ChEBI" id="CHEBI:157695"/>
        <dbReference type="ChEBI" id="CHEBI:167181"/>
        <dbReference type="EC" id="4.2.99.18"/>
    </reaction>
</comment>
<comment type="cofactor">
    <cofactor evidence="2">
        <name>Zn(2+)</name>
        <dbReference type="ChEBI" id="CHEBI:29105"/>
    </cofactor>
    <text evidence="2">Binds 1 zinc ion per subunit.</text>
</comment>
<comment type="subunit">
    <text evidence="2">Monomer.</text>
</comment>
<comment type="similarity">
    <text evidence="2">Belongs to the FPG family.</text>
</comment>
<protein>
    <recommendedName>
        <fullName evidence="2">Formamidopyrimidine-DNA glycosylase</fullName>
        <shortName evidence="2">Fapy-DNA glycosylase</shortName>
        <ecNumber evidence="2">3.2.2.23</ecNumber>
    </recommendedName>
    <alternativeName>
        <fullName evidence="2">DNA-(apurinic or apyrimidinic site) lyase MutM</fullName>
        <shortName evidence="2">AP lyase MutM</shortName>
        <ecNumber evidence="2">4.2.99.18</ecNumber>
    </alternativeName>
</protein>
<accession>Q1RJY6</accession>
<gene>
    <name evidence="2" type="primary">mutM</name>
    <name evidence="2" type="synonym">fpg</name>
    <name type="ordered locus">RBE_0247</name>
</gene>
<sequence>MPELPEVETLKNSLESKLIGLVIKKVEFKRDNLRYKLSADLADQIVNTNIINVRRRAKYLIIDFNNNHSLIVHLGMSGRFTLQPNNYEVKKHDHVVFNLSNNEKLIFNDTRRFGMIYSFHTELLEKDFFANLALEPLSDSFELQYLKSKLMNKKVPIKNLLMDNRIVVGVGNIYASESLHLAKIHPDKFGKDLNDDEIKNLIAAVKNVLSKAIIAGGTTLKDFVNGDNKPGYFTQQLMVYARDGQECLSCSSSIIKTKHSGRSTFYCKSCQKA</sequence>
<name>FPG_RICBR</name>
<organism>
    <name type="scientific">Rickettsia bellii (strain RML369-C)</name>
    <dbReference type="NCBI Taxonomy" id="336407"/>
    <lineage>
        <taxon>Bacteria</taxon>
        <taxon>Pseudomonadati</taxon>
        <taxon>Pseudomonadota</taxon>
        <taxon>Alphaproteobacteria</taxon>
        <taxon>Rickettsiales</taxon>
        <taxon>Rickettsiaceae</taxon>
        <taxon>Rickettsieae</taxon>
        <taxon>Rickettsia</taxon>
        <taxon>belli group</taxon>
    </lineage>
</organism>
<proteinExistence type="inferred from homology"/>
<dbReference type="EC" id="3.2.2.23" evidence="2"/>
<dbReference type="EC" id="4.2.99.18" evidence="2"/>
<dbReference type="EMBL" id="CP000087">
    <property type="protein sequence ID" value="ABE04328.1"/>
    <property type="molecule type" value="Genomic_DNA"/>
</dbReference>
<dbReference type="RefSeq" id="WP_011476941.1">
    <property type="nucleotide sequence ID" value="NC_007940.1"/>
</dbReference>
<dbReference type="SMR" id="Q1RJY6"/>
<dbReference type="KEGG" id="rbe:RBE_0247"/>
<dbReference type="eggNOG" id="COG0266">
    <property type="taxonomic scope" value="Bacteria"/>
</dbReference>
<dbReference type="HOGENOM" id="CLU_038423_1_1_5"/>
<dbReference type="OrthoDB" id="9800855at2"/>
<dbReference type="Proteomes" id="UP000001951">
    <property type="component" value="Chromosome"/>
</dbReference>
<dbReference type="GO" id="GO:0034039">
    <property type="term" value="F:8-oxo-7,8-dihydroguanine DNA N-glycosylase activity"/>
    <property type="evidence" value="ECO:0007669"/>
    <property type="project" value="TreeGrafter"/>
</dbReference>
<dbReference type="GO" id="GO:0140078">
    <property type="term" value="F:class I DNA-(apurinic or apyrimidinic site) endonuclease activity"/>
    <property type="evidence" value="ECO:0007669"/>
    <property type="project" value="UniProtKB-EC"/>
</dbReference>
<dbReference type="GO" id="GO:0003684">
    <property type="term" value="F:damaged DNA binding"/>
    <property type="evidence" value="ECO:0007669"/>
    <property type="project" value="InterPro"/>
</dbReference>
<dbReference type="GO" id="GO:0008270">
    <property type="term" value="F:zinc ion binding"/>
    <property type="evidence" value="ECO:0007669"/>
    <property type="project" value="UniProtKB-UniRule"/>
</dbReference>
<dbReference type="GO" id="GO:0006284">
    <property type="term" value="P:base-excision repair"/>
    <property type="evidence" value="ECO:0007669"/>
    <property type="project" value="InterPro"/>
</dbReference>
<dbReference type="CDD" id="cd08966">
    <property type="entry name" value="EcFpg-like_N"/>
    <property type="match status" value="1"/>
</dbReference>
<dbReference type="FunFam" id="1.10.8.50:FF:000003">
    <property type="entry name" value="Formamidopyrimidine-DNA glycosylase"/>
    <property type="match status" value="1"/>
</dbReference>
<dbReference type="Gene3D" id="1.10.8.50">
    <property type="match status" value="1"/>
</dbReference>
<dbReference type="Gene3D" id="3.20.190.10">
    <property type="entry name" value="MutM-like, N-terminal"/>
    <property type="match status" value="1"/>
</dbReference>
<dbReference type="HAMAP" id="MF_00103">
    <property type="entry name" value="Fapy_DNA_glycosyl"/>
    <property type="match status" value="1"/>
</dbReference>
<dbReference type="InterPro" id="IPR015886">
    <property type="entry name" value="DNA_glyclase/AP_lyase_DNA-bd"/>
</dbReference>
<dbReference type="InterPro" id="IPR015887">
    <property type="entry name" value="DNA_glyclase_Znf_dom_DNA_BS"/>
</dbReference>
<dbReference type="InterPro" id="IPR020629">
    <property type="entry name" value="Formamido-pyr_DNA_Glyclase"/>
</dbReference>
<dbReference type="InterPro" id="IPR012319">
    <property type="entry name" value="FPG_cat"/>
</dbReference>
<dbReference type="InterPro" id="IPR035937">
    <property type="entry name" value="MutM-like_N-ter"/>
</dbReference>
<dbReference type="InterPro" id="IPR010979">
    <property type="entry name" value="Ribosomal_uS13-like_H2TH"/>
</dbReference>
<dbReference type="InterPro" id="IPR000214">
    <property type="entry name" value="Znf_DNA_glyclase/AP_lyase"/>
</dbReference>
<dbReference type="InterPro" id="IPR010663">
    <property type="entry name" value="Znf_FPG/IleRS"/>
</dbReference>
<dbReference type="NCBIfam" id="TIGR00577">
    <property type="entry name" value="fpg"/>
    <property type="match status" value="1"/>
</dbReference>
<dbReference type="NCBIfam" id="NF002211">
    <property type="entry name" value="PRK01103.1"/>
    <property type="match status" value="1"/>
</dbReference>
<dbReference type="PANTHER" id="PTHR22993">
    <property type="entry name" value="FORMAMIDOPYRIMIDINE-DNA GLYCOSYLASE"/>
    <property type="match status" value="1"/>
</dbReference>
<dbReference type="PANTHER" id="PTHR22993:SF9">
    <property type="entry name" value="FORMAMIDOPYRIMIDINE-DNA GLYCOSYLASE"/>
    <property type="match status" value="1"/>
</dbReference>
<dbReference type="Pfam" id="PF01149">
    <property type="entry name" value="Fapy_DNA_glyco"/>
    <property type="match status" value="1"/>
</dbReference>
<dbReference type="Pfam" id="PF06831">
    <property type="entry name" value="H2TH"/>
    <property type="match status" value="1"/>
</dbReference>
<dbReference type="Pfam" id="PF06827">
    <property type="entry name" value="zf-FPG_IleRS"/>
    <property type="match status" value="1"/>
</dbReference>
<dbReference type="SMART" id="SM00898">
    <property type="entry name" value="Fapy_DNA_glyco"/>
    <property type="match status" value="1"/>
</dbReference>
<dbReference type="SMART" id="SM01232">
    <property type="entry name" value="H2TH"/>
    <property type="match status" value="1"/>
</dbReference>
<dbReference type="SUPFAM" id="SSF57716">
    <property type="entry name" value="Glucocorticoid receptor-like (DNA-binding domain)"/>
    <property type="match status" value="1"/>
</dbReference>
<dbReference type="SUPFAM" id="SSF81624">
    <property type="entry name" value="N-terminal domain of MutM-like DNA repair proteins"/>
    <property type="match status" value="1"/>
</dbReference>
<dbReference type="SUPFAM" id="SSF46946">
    <property type="entry name" value="S13-like H2TH domain"/>
    <property type="match status" value="1"/>
</dbReference>
<dbReference type="PROSITE" id="PS51068">
    <property type="entry name" value="FPG_CAT"/>
    <property type="match status" value="1"/>
</dbReference>
<dbReference type="PROSITE" id="PS01242">
    <property type="entry name" value="ZF_FPG_1"/>
    <property type="match status" value="1"/>
</dbReference>
<dbReference type="PROSITE" id="PS51066">
    <property type="entry name" value="ZF_FPG_2"/>
    <property type="match status" value="1"/>
</dbReference>
<keyword id="KW-0227">DNA damage</keyword>
<keyword id="KW-0234">DNA repair</keyword>
<keyword id="KW-0238">DNA-binding</keyword>
<keyword id="KW-0326">Glycosidase</keyword>
<keyword id="KW-0378">Hydrolase</keyword>
<keyword id="KW-0456">Lyase</keyword>
<keyword id="KW-0479">Metal-binding</keyword>
<keyword id="KW-0511">Multifunctional enzyme</keyword>
<keyword id="KW-0862">Zinc</keyword>
<keyword id="KW-0863">Zinc-finger</keyword>
<evidence type="ECO:0000250" key="1"/>
<evidence type="ECO:0000255" key="2">
    <source>
        <dbReference type="HAMAP-Rule" id="MF_00103"/>
    </source>
</evidence>
<feature type="initiator methionine" description="Removed" evidence="1">
    <location>
        <position position="1"/>
    </location>
</feature>
<feature type="chain" id="PRO_0000277904" description="Formamidopyrimidine-DNA glycosylase">
    <location>
        <begin position="2"/>
        <end position="273"/>
    </location>
</feature>
<feature type="zinc finger region" description="FPG-type" evidence="2">
    <location>
        <begin position="238"/>
        <end position="272"/>
    </location>
</feature>
<feature type="active site" description="Schiff-base intermediate with DNA" evidence="2">
    <location>
        <position position="2"/>
    </location>
</feature>
<feature type="active site" description="Proton donor" evidence="2">
    <location>
        <position position="3"/>
    </location>
</feature>
<feature type="active site" description="Proton donor; for beta-elimination activity" evidence="2">
    <location>
        <position position="58"/>
    </location>
</feature>
<feature type="active site" description="Proton donor; for delta-elimination activity" evidence="2">
    <location>
        <position position="262"/>
    </location>
</feature>
<feature type="binding site" evidence="2">
    <location>
        <position position="92"/>
    </location>
    <ligand>
        <name>DNA</name>
        <dbReference type="ChEBI" id="CHEBI:16991"/>
    </ligand>
</feature>
<feature type="binding site" evidence="2">
    <location>
        <position position="111"/>
    </location>
    <ligand>
        <name>DNA</name>
        <dbReference type="ChEBI" id="CHEBI:16991"/>
    </ligand>
</feature>
<feature type="binding site" evidence="2">
    <location>
        <position position="153"/>
    </location>
    <ligand>
        <name>DNA</name>
        <dbReference type="ChEBI" id="CHEBI:16991"/>
    </ligand>
</feature>